<protein>
    <recommendedName>
        <fullName evidence="1">NADH-quinone oxidoreductase subunit K</fullName>
        <ecNumber evidence="1">7.1.1.-</ecNumber>
    </recommendedName>
    <alternativeName>
        <fullName evidence="1">NADH dehydrogenase I subunit K</fullName>
    </alternativeName>
    <alternativeName>
        <fullName evidence="1">NDH-1 subunit K</fullName>
    </alternativeName>
</protein>
<sequence length="102" mass="10954">MNAIPLEHGLALASVLFALGLVGLMVRRNILFVLMSLEVMMNAAALAFVVAGSRWGQPDGQVMFILVLSLAAAEASIGLAILLQLYRRFHTLDIDAASEMRG</sequence>
<dbReference type="EC" id="7.1.1.-" evidence="1"/>
<dbReference type="EMBL" id="CP000744">
    <property type="protein sequence ID" value="ABR83445.1"/>
    <property type="molecule type" value="Genomic_DNA"/>
</dbReference>
<dbReference type="RefSeq" id="WP_003090475.1">
    <property type="nucleotide sequence ID" value="NC_009656.1"/>
</dbReference>
<dbReference type="SMR" id="A6V4D9"/>
<dbReference type="GeneID" id="77220817"/>
<dbReference type="KEGG" id="pap:PSPA7_2560"/>
<dbReference type="HOGENOM" id="CLU_144724_0_1_6"/>
<dbReference type="Proteomes" id="UP000001582">
    <property type="component" value="Chromosome"/>
</dbReference>
<dbReference type="GO" id="GO:0030964">
    <property type="term" value="C:NADH dehydrogenase complex"/>
    <property type="evidence" value="ECO:0007669"/>
    <property type="project" value="TreeGrafter"/>
</dbReference>
<dbReference type="GO" id="GO:0005886">
    <property type="term" value="C:plasma membrane"/>
    <property type="evidence" value="ECO:0007669"/>
    <property type="project" value="UniProtKB-SubCell"/>
</dbReference>
<dbReference type="GO" id="GO:0050136">
    <property type="term" value="F:NADH:ubiquinone reductase (non-electrogenic) activity"/>
    <property type="evidence" value="ECO:0007669"/>
    <property type="project" value="UniProtKB-UniRule"/>
</dbReference>
<dbReference type="GO" id="GO:0048038">
    <property type="term" value="F:quinone binding"/>
    <property type="evidence" value="ECO:0007669"/>
    <property type="project" value="UniProtKB-KW"/>
</dbReference>
<dbReference type="GO" id="GO:0042773">
    <property type="term" value="P:ATP synthesis coupled electron transport"/>
    <property type="evidence" value="ECO:0007669"/>
    <property type="project" value="InterPro"/>
</dbReference>
<dbReference type="FunFam" id="1.10.287.3510:FF:000001">
    <property type="entry name" value="NADH-quinone oxidoreductase subunit K"/>
    <property type="match status" value="1"/>
</dbReference>
<dbReference type="Gene3D" id="1.10.287.3510">
    <property type="match status" value="1"/>
</dbReference>
<dbReference type="HAMAP" id="MF_01456">
    <property type="entry name" value="NDH1_NuoK"/>
    <property type="match status" value="1"/>
</dbReference>
<dbReference type="InterPro" id="IPR001133">
    <property type="entry name" value="NADH_UbQ_OxRdtase_chain4L/K"/>
</dbReference>
<dbReference type="InterPro" id="IPR039428">
    <property type="entry name" value="NUOK/Mnh_C1-like"/>
</dbReference>
<dbReference type="NCBIfam" id="NF004319">
    <property type="entry name" value="PRK05715.1-1"/>
    <property type="match status" value="1"/>
</dbReference>
<dbReference type="NCBIfam" id="NF004320">
    <property type="entry name" value="PRK05715.1-2"/>
    <property type="match status" value="1"/>
</dbReference>
<dbReference type="PANTHER" id="PTHR11434:SF16">
    <property type="entry name" value="NADH-UBIQUINONE OXIDOREDUCTASE CHAIN 4L"/>
    <property type="match status" value="1"/>
</dbReference>
<dbReference type="PANTHER" id="PTHR11434">
    <property type="entry name" value="NADH-UBIQUINONE OXIDOREDUCTASE SUBUNIT ND4L"/>
    <property type="match status" value="1"/>
</dbReference>
<dbReference type="Pfam" id="PF00420">
    <property type="entry name" value="Oxidored_q2"/>
    <property type="match status" value="1"/>
</dbReference>
<keyword id="KW-0997">Cell inner membrane</keyword>
<keyword id="KW-1003">Cell membrane</keyword>
<keyword id="KW-0472">Membrane</keyword>
<keyword id="KW-0520">NAD</keyword>
<keyword id="KW-0874">Quinone</keyword>
<keyword id="KW-1278">Translocase</keyword>
<keyword id="KW-0812">Transmembrane</keyword>
<keyword id="KW-1133">Transmembrane helix</keyword>
<keyword id="KW-0813">Transport</keyword>
<keyword id="KW-0830">Ubiquinone</keyword>
<evidence type="ECO:0000255" key="1">
    <source>
        <dbReference type="HAMAP-Rule" id="MF_01456"/>
    </source>
</evidence>
<comment type="function">
    <text evidence="1">NDH-1 shuttles electrons from NADH, via FMN and iron-sulfur (Fe-S) centers, to quinones in the respiratory chain. The immediate electron acceptor for the enzyme in this species is believed to be ubiquinone. Couples the redox reaction to proton translocation (for every two electrons transferred, four hydrogen ions are translocated across the cytoplasmic membrane), and thus conserves the redox energy in a proton gradient.</text>
</comment>
<comment type="catalytic activity">
    <reaction evidence="1">
        <text>a quinone + NADH + 5 H(+)(in) = a quinol + NAD(+) + 4 H(+)(out)</text>
        <dbReference type="Rhea" id="RHEA:57888"/>
        <dbReference type="ChEBI" id="CHEBI:15378"/>
        <dbReference type="ChEBI" id="CHEBI:24646"/>
        <dbReference type="ChEBI" id="CHEBI:57540"/>
        <dbReference type="ChEBI" id="CHEBI:57945"/>
        <dbReference type="ChEBI" id="CHEBI:132124"/>
    </reaction>
</comment>
<comment type="subunit">
    <text evidence="1">NDH-1 is composed of 13 different subunits. Subunits NuoA, H, J, K, L, M, N constitute the membrane sector of the complex.</text>
</comment>
<comment type="subcellular location">
    <subcellularLocation>
        <location evidence="1">Cell inner membrane</location>
        <topology evidence="1">Multi-pass membrane protein</topology>
    </subcellularLocation>
</comment>
<comment type="similarity">
    <text evidence="1">Belongs to the complex I subunit 4L family.</text>
</comment>
<gene>
    <name evidence="1" type="primary">nuoK</name>
    <name type="ordered locus">PSPA7_2560</name>
</gene>
<accession>A6V4D9</accession>
<proteinExistence type="inferred from homology"/>
<reference key="1">
    <citation type="submission" date="2007-06" db="EMBL/GenBank/DDBJ databases">
        <authorList>
            <person name="Dodson R.J."/>
            <person name="Harkins D."/>
            <person name="Paulsen I.T."/>
        </authorList>
    </citation>
    <scope>NUCLEOTIDE SEQUENCE [LARGE SCALE GENOMIC DNA]</scope>
    <source>
        <strain>DSM 24068 / PA7</strain>
    </source>
</reference>
<feature type="chain" id="PRO_0000390164" description="NADH-quinone oxidoreductase subunit K">
    <location>
        <begin position="1"/>
        <end position="102"/>
    </location>
</feature>
<feature type="transmembrane region" description="Helical" evidence="1">
    <location>
        <begin position="6"/>
        <end position="26"/>
    </location>
</feature>
<feature type="transmembrane region" description="Helical" evidence="1">
    <location>
        <begin position="30"/>
        <end position="50"/>
    </location>
</feature>
<feature type="transmembrane region" description="Helical" evidence="1">
    <location>
        <begin position="62"/>
        <end position="82"/>
    </location>
</feature>
<name>NUOK_PSEP7</name>
<organism>
    <name type="scientific">Pseudomonas paraeruginosa (strain DSM 24068 / PA7)</name>
    <name type="common">Pseudomonas aeruginosa (strain PA7)</name>
    <dbReference type="NCBI Taxonomy" id="381754"/>
    <lineage>
        <taxon>Bacteria</taxon>
        <taxon>Pseudomonadati</taxon>
        <taxon>Pseudomonadota</taxon>
        <taxon>Gammaproteobacteria</taxon>
        <taxon>Pseudomonadales</taxon>
        <taxon>Pseudomonadaceae</taxon>
        <taxon>Pseudomonas</taxon>
        <taxon>Pseudomonas paraeruginosa</taxon>
    </lineage>
</organism>